<sequence length="419" mass="46420">MARAAGARGPAGWCRRRGRCGRGTLLAFAAWTAGWVLAAALLLRAHPGVLSERCTDEKSRRILAALCQDYQGGTLAGDLCEDLCVAGELLFQRCLHYNRGKKVLQADWRGRPVVLKSKEEAFSSFPPLSLLEEEAGEGGQDMPEAELLLMVAGEVKSALGLELSNSSLGPWWPGRRGPRWRGQLASLWALLQQEEYVYFSLLQDLSPHVLPVLGSCGHFYAVEFLAAGSPHHRALFPLDRAPGAPGGGQAKAISDIALSFLDMVNHFDSDFSHRLHLCDIKPENFAIRSDFTVVAIDVDMAFFEPKMREILEQNCTGDEDCNFFDCFSRCDLRVNKCGAQRVNNNLQVICDKIFRHWFSAPLKSSAVSFQLQLQLQEAVQECADPGVPSGNTRRAASSVFWKLRQLLQATLRELQEAEK</sequence>
<accession>Q0P6D2</accession>
<comment type="subcellular location">
    <subcellularLocation>
        <location evidence="2">Endoplasmic reticulum membrane</location>
        <topology evidence="2">Single-pass type II membrane protein</topology>
    </subcellularLocation>
</comment>
<comment type="alternative products">
    <event type="alternative splicing"/>
    <isoform>
        <id>Q0P6D2-1</id>
        <name>1</name>
        <sequence type="displayed"/>
    </isoform>
    <isoform>
        <id>Q0P6D2-2</id>
        <name>2</name>
        <sequence type="described" ref="VSP_025146"/>
    </isoform>
</comment>
<comment type="PTM">
    <text evidence="1">Among the many cysteines in the lumenal domain, most are probably involved in disulfide bonds.</text>
</comment>
<comment type="similarity">
    <text evidence="5">Belongs to the DIPK family.</text>
</comment>
<dbReference type="EMBL" id="AC009704">
    <property type="status" value="NOT_ANNOTATED_CDS"/>
    <property type="molecule type" value="Genomic_DNA"/>
</dbReference>
<dbReference type="EMBL" id="BC019628">
    <property type="protein sequence ID" value="AAH19628.1"/>
    <property type="molecule type" value="mRNA"/>
</dbReference>
<dbReference type="CCDS" id="CCDS42445.2">
    <molecule id="Q0P6D2-1"/>
</dbReference>
<dbReference type="RefSeq" id="NP_001037834.2">
    <molecule id="Q0P6D2-1"/>
    <property type="nucleotide sequence ID" value="NM_001044369.3"/>
</dbReference>
<dbReference type="BioGRID" id="125930">
    <property type="interactions" value="3"/>
</dbReference>
<dbReference type="FunCoup" id="Q0P6D2">
    <property type="interactions" value="22"/>
</dbReference>
<dbReference type="IntAct" id="Q0P6D2">
    <property type="interactions" value="1"/>
</dbReference>
<dbReference type="STRING" id="9606.ENSP00000344331"/>
<dbReference type="GlyGen" id="Q0P6D2">
    <property type="glycosylation" value="1 site, 1 O-linked glycan (1 site)"/>
</dbReference>
<dbReference type="iPTMnet" id="Q0P6D2"/>
<dbReference type="PhosphoSitePlus" id="Q0P6D2"/>
<dbReference type="BioMuta" id="FAM69C"/>
<dbReference type="DMDM" id="296439351"/>
<dbReference type="MassIVE" id="Q0P6D2"/>
<dbReference type="PaxDb" id="9606-ENSP00000344331"/>
<dbReference type="PeptideAtlas" id="Q0P6D2"/>
<dbReference type="ProteomicsDB" id="58776">
    <molecule id="Q0P6D2-1"/>
</dbReference>
<dbReference type="ProteomicsDB" id="58777">
    <molecule id="Q0P6D2-2"/>
</dbReference>
<dbReference type="Antibodypedia" id="62764">
    <property type="antibodies" value="6 antibodies from 6 providers"/>
</dbReference>
<dbReference type="DNASU" id="125704"/>
<dbReference type="Ensembl" id="ENST00000343998.8">
    <molecule id="Q0P6D2-1"/>
    <property type="protein sequence ID" value="ENSP00000344331.6"/>
    <property type="gene ID" value="ENSG00000187773.9"/>
</dbReference>
<dbReference type="Ensembl" id="ENST00000400291.2">
    <molecule id="Q0P6D2-2"/>
    <property type="protein sequence ID" value="ENSP00000383148.2"/>
    <property type="gene ID" value="ENSG00000187773.9"/>
</dbReference>
<dbReference type="GeneID" id="125704"/>
<dbReference type="KEGG" id="hsa:125704"/>
<dbReference type="MANE-Select" id="ENST00000343998.8">
    <property type="protein sequence ID" value="ENSP00000344331.6"/>
    <property type="RefSeq nucleotide sequence ID" value="NM_001044369.3"/>
    <property type="RefSeq protein sequence ID" value="NP_001037834.2"/>
</dbReference>
<dbReference type="UCSC" id="uc002llk.4">
    <molecule id="Q0P6D2-1"/>
    <property type="organism name" value="human"/>
</dbReference>
<dbReference type="AGR" id="HGNC:31729"/>
<dbReference type="CTD" id="125704"/>
<dbReference type="DisGeNET" id="125704"/>
<dbReference type="GeneCards" id="DIPK1C"/>
<dbReference type="HGNC" id="HGNC:31729">
    <property type="gene designation" value="DIPK1C"/>
</dbReference>
<dbReference type="HPA" id="ENSG00000187773">
    <property type="expression patterns" value="Tissue enhanced (brain, retina)"/>
</dbReference>
<dbReference type="MIM" id="614544">
    <property type="type" value="gene"/>
</dbReference>
<dbReference type="neXtProt" id="NX_Q0P6D2"/>
<dbReference type="OpenTargets" id="ENSG00000187773"/>
<dbReference type="PharmGKB" id="PA165428999"/>
<dbReference type="VEuPathDB" id="HostDB:ENSG00000187773"/>
<dbReference type="eggNOG" id="ENOG502QSPC">
    <property type="taxonomic scope" value="Eukaryota"/>
</dbReference>
<dbReference type="GeneTree" id="ENSGT00390000006452"/>
<dbReference type="HOGENOM" id="CLU_042490_0_0_1"/>
<dbReference type="InParanoid" id="Q0P6D2"/>
<dbReference type="OMA" id="LHYDRGK"/>
<dbReference type="OrthoDB" id="8543887at2759"/>
<dbReference type="PAN-GO" id="Q0P6D2">
    <property type="GO annotations" value="0 GO annotations based on evolutionary models"/>
</dbReference>
<dbReference type="PhylomeDB" id="Q0P6D2"/>
<dbReference type="TreeFam" id="TF313319"/>
<dbReference type="PathwayCommons" id="Q0P6D2"/>
<dbReference type="SignaLink" id="Q0P6D2"/>
<dbReference type="BioGRID-ORCS" id="125704">
    <property type="hits" value="9 hits in 1139 CRISPR screens"/>
</dbReference>
<dbReference type="ChiTaRS" id="DIPK1C">
    <property type="organism name" value="human"/>
</dbReference>
<dbReference type="GenomeRNAi" id="125704"/>
<dbReference type="Pharos" id="Q0P6D2">
    <property type="development level" value="Tdark"/>
</dbReference>
<dbReference type="PRO" id="PR:Q0P6D2"/>
<dbReference type="Proteomes" id="UP000005640">
    <property type="component" value="Chromosome 18"/>
</dbReference>
<dbReference type="RNAct" id="Q0P6D2">
    <property type="molecule type" value="protein"/>
</dbReference>
<dbReference type="Bgee" id="ENSG00000187773">
    <property type="expression patterns" value="Expressed in ventricular zone and 112 other cell types or tissues"/>
</dbReference>
<dbReference type="GO" id="GO:0005789">
    <property type="term" value="C:endoplasmic reticulum membrane"/>
    <property type="evidence" value="ECO:0007669"/>
    <property type="project" value="UniProtKB-SubCell"/>
</dbReference>
<dbReference type="InterPro" id="IPR022049">
    <property type="entry name" value="FAM69_kinase_dom"/>
</dbReference>
<dbReference type="InterPro" id="IPR029244">
    <property type="entry name" value="FAM69_N"/>
</dbReference>
<dbReference type="InterPro" id="IPR011009">
    <property type="entry name" value="Kinase-like_dom_sf"/>
</dbReference>
<dbReference type="PANTHER" id="PTHR21093:SF2">
    <property type="entry name" value="DIVERGENT PROTEIN KINASE DOMAIN 1C"/>
    <property type="match status" value="1"/>
</dbReference>
<dbReference type="PANTHER" id="PTHR21093">
    <property type="entry name" value="DIVERGENT PROTEIN KINASE DOMAIN 1C-RELATED"/>
    <property type="match status" value="1"/>
</dbReference>
<dbReference type="Pfam" id="PF12260">
    <property type="entry name" value="PIP49_C"/>
    <property type="match status" value="1"/>
</dbReference>
<dbReference type="Pfam" id="PF14875">
    <property type="entry name" value="PIP49_N"/>
    <property type="match status" value="1"/>
</dbReference>
<dbReference type="SMART" id="SM01299">
    <property type="entry name" value="PIP49_N"/>
    <property type="match status" value="1"/>
</dbReference>
<dbReference type="SUPFAM" id="SSF56112">
    <property type="entry name" value="Protein kinase-like (PK-like)"/>
    <property type="match status" value="1"/>
</dbReference>
<evidence type="ECO:0000250" key="1"/>
<evidence type="ECO:0000250" key="2">
    <source>
        <dbReference type="UniProtKB" id="Q8BQT2"/>
    </source>
</evidence>
<evidence type="ECO:0000255" key="3"/>
<evidence type="ECO:0000303" key="4">
    <source>
    </source>
</evidence>
<evidence type="ECO:0000305" key="5"/>
<evidence type="ECO:0000312" key="6">
    <source>
        <dbReference type="HGNC" id="HGNC:31729"/>
    </source>
</evidence>
<name>DIK1C_HUMAN</name>
<keyword id="KW-0025">Alternative splicing</keyword>
<keyword id="KW-1015">Disulfide bond</keyword>
<keyword id="KW-0256">Endoplasmic reticulum</keyword>
<keyword id="KW-0472">Membrane</keyword>
<keyword id="KW-1267">Proteomics identification</keyword>
<keyword id="KW-1185">Reference proteome</keyword>
<keyword id="KW-0735">Signal-anchor</keyword>
<keyword id="KW-0812">Transmembrane</keyword>
<keyword id="KW-1133">Transmembrane helix</keyword>
<organism>
    <name type="scientific">Homo sapiens</name>
    <name type="common">Human</name>
    <dbReference type="NCBI Taxonomy" id="9606"/>
    <lineage>
        <taxon>Eukaryota</taxon>
        <taxon>Metazoa</taxon>
        <taxon>Chordata</taxon>
        <taxon>Craniata</taxon>
        <taxon>Vertebrata</taxon>
        <taxon>Euteleostomi</taxon>
        <taxon>Mammalia</taxon>
        <taxon>Eutheria</taxon>
        <taxon>Euarchontoglires</taxon>
        <taxon>Primates</taxon>
        <taxon>Haplorrhini</taxon>
        <taxon>Catarrhini</taxon>
        <taxon>Hominidae</taxon>
        <taxon>Homo</taxon>
    </lineage>
</organism>
<reference key="1">
    <citation type="journal article" date="2005" name="Nature">
        <title>DNA sequence and analysis of human chromosome 18.</title>
        <authorList>
            <person name="Nusbaum C."/>
            <person name="Zody M.C."/>
            <person name="Borowsky M.L."/>
            <person name="Kamal M."/>
            <person name="Kodira C.D."/>
            <person name="Taylor T.D."/>
            <person name="Whittaker C.A."/>
            <person name="Chang J.L."/>
            <person name="Cuomo C.A."/>
            <person name="Dewar K."/>
            <person name="FitzGerald M.G."/>
            <person name="Yang X."/>
            <person name="Abouelleil A."/>
            <person name="Allen N.R."/>
            <person name="Anderson S."/>
            <person name="Bloom T."/>
            <person name="Bugalter B."/>
            <person name="Butler J."/>
            <person name="Cook A."/>
            <person name="DeCaprio D."/>
            <person name="Engels R."/>
            <person name="Garber M."/>
            <person name="Gnirke A."/>
            <person name="Hafez N."/>
            <person name="Hall J.L."/>
            <person name="Norman C.H."/>
            <person name="Itoh T."/>
            <person name="Jaffe D.B."/>
            <person name="Kuroki Y."/>
            <person name="Lehoczky J."/>
            <person name="Lui A."/>
            <person name="Macdonald P."/>
            <person name="Mauceli E."/>
            <person name="Mikkelsen T.S."/>
            <person name="Naylor J.W."/>
            <person name="Nicol R."/>
            <person name="Nguyen C."/>
            <person name="Noguchi H."/>
            <person name="O'Leary S.B."/>
            <person name="Piqani B."/>
            <person name="Smith C.L."/>
            <person name="Talamas J.A."/>
            <person name="Topham K."/>
            <person name="Totoki Y."/>
            <person name="Toyoda A."/>
            <person name="Wain H.M."/>
            <person name="Young S.K."/>
            <person name="Zeng Q."/>
            <person name="Zimmer A.R."/>
            <person name="Fujiyama A."/>
            <person name="Hattori M."/>
            <person name="Birren B.W."/>
            <person name="Sakaki Y."/>
            <person name="Lander E.S."/>
        </authorList>
    </citation>
    <scope>NUCLEOTIDE SEQUENCE [LARGE SCALE GENOMIC DNA]</scope>
</reference>
<reference key="2">
    <citation type="journal article" date="2004" name="Genome Res.">
        <title>The status, quality, and expansion of the NIH full-length cDNA project: the Mammalian Gene Collection (MGC).</title>
        <authorList>
            <consortium name="The MGC Project Team"/>
        </authorList>
    </citation>
    <scope>NUCLEOTIDE SEQUENCE [LARGE SCALE MRNA] (ISOFORM 2)</scope>
    <source>
        <tissue>Testis</tissue>
    </source>
</reference>
<proteinExistence type="evidence at protein level"/>
<gene>
    <name evidence="6" type="primary">DIPK1C</name>
    <name type="synonym">C18orf51</name>
    <name type="synonym">FAM69C</name>
</gene>
<protein>
    <recommendedName>
        <fullName evidence="5">Divergent protein kinase domain 1C</fullName>
    </recommendedName>
    <alternativeName>
        <fullName>Protein FAM69C</fullName>
    </alternativeName>
</protein>
<feature type="chain" id="PRO_0000286707" description="Divergent protein kinase domain 1C">
    <location>
        <begin position="1"/>
        <end position="419"/>
    </location>
</feature>
<feature type="topological domain" description="Cytoplasmic" evidence="3">
    <location>
        <begin position="1"/>
        <end position="22"/>
    </location>
</feature>
<feature type="transmembrane region" description="Helical" evidence="3">
    <location>
        <begin position="23"/>
        <end position="43"/>
    </location>
</feature>
<feature type="topological domain" description="Lumenal" evidence="3">
    <location>
        <begin position="44"/>
        <end position="419"/>
    </location>
</feature>
<feature type="short sequence motif" description="May mediate ER retention" evidence="1">
    <location>
        <begin position="16"/>
        <end position="17"/>
    </location>
</feature>
<feature type="splice variant" id="VSP_025146" description="In isoform 2." evidence="4">
    <location>
        <begin position="1"/>
        <end position="299"/>
    </location>
</feature>